<comment type="function">
    <text evidence="1">Component of the PEX1-PEX6 AAA ATPase complex, a protein dislocase complex that mediates the ATP-dependent extraction of the PEX5 receptor from peroxisomal membranes, an essential step for PEX5 recycling. Specifically recognizes PEX5 monoubiquitinated at 'Cys-11', and pulls it out of the peroxisome lumen through the PEX2-PEX10-PEX12 retrotranslocation channel. Extraction by the PEX1-PEX6 AAA ATPase complex is accompanied by unfolding of the TPR repeats and release of bound cargo from PEX5.</text>
</comment>
<comment type="catalytic activity">
    <reaction evidence="1">
        <text>ATP + H2O = ADP + phosphate + H(+)</text>
        <dbReference type="Rhea" id="RHEA:13065"/>
        <dbReference type="ChEBI" id="CHEBI:15377"/>
        <dbReference type="ChEBI" id="CHEBI:15378"/>
        <dbReference type="ChEBI" id="CHEBI:30616"/>
        <dbReference type="ChEBI" id="CHEBI:43474"/>
        <dbReference type="ChEBI" id="CHEBI:456216"/>
    </reaction>
    <physiologicalReaction direction="left-to-right" evidence="1">
        <dbReference type="Rhea" id="RHEA:13066"/>
    </physiologicalReaction>
</comment>
<comment type="subunit">
    <text evidence="1">Interacts with PEX6; forming the PEX1-PEX6 AAA ATPase complex, which is composed of a heterohexamer formed by a trimer of PEX1-PEX6 dimers.</text>
</comment>
<comment type="subcellular location">
    <subcellularLocation>
        <location evidence="1">Cytoplasm</location>
        <location evidence="1">Cytosol</location>
    </subcellularLocation>
    <subcellularLocation>
        <location evidence="1">Peroxisome membrane</location>
    </subcellularLocation>
</comment>
<comment type="similarity">
    <text evidence="4">Belongs to the AAA ATPase family.</text>
</comment>
<keyword id="KW-0067">ATP-binding</keyword>
<keyword id="KW-0175">Coiled coil</keyword>
<keyword id="KW-0963">Cytoplasm</keyword>
<keyword id="KW-0378">Hydrolase</keyword>
<keyword id="KW-0472">Membrane</keyword>
<keyword id="KW-0547">Nucleotide-binding</keyword>
<keyword id="KW-0576">Peroxisome</keyword>
<keyword id="KW-0962">Peroxisome biogenesis</keyword>
<keyword id="KW-0653">Protein transport</keyword>
<keyword id="KW-1185">Reference proteome</keyword>
<keyword id="KW-0677">Repeat</keyword>
<keyword id="KW-0813">Transport</keyword>
<reference key="1">
    <citation type="journal article" date="2005" name="Nature">
        <title>The genome of the social amoeba Dictyostelium discoideum.</title>
        <authorList>
            <person name="Eichinger L."/>
            <person name="Pachebat J.A."/>
            <person name="Gloeckner G."/>
            <person name="Rajandream M.A."/>
            <person name="Sucgang R."/>
            <person name="Berriman M."/>
            <person name="Song J."/>
            <person name="Olsen R."/>
            <person name="Szafranski K."/>
            <person name="Xu Q."/>
            <person name="Tunggal B."/>
            <person name="Kummerfeld S."/>
            <person name="Madera M."/>
            <person name="Konfortov B.A."/>
            <person name="Rivero F."/>
            <person name="Bankier A.T."/>
            <person name="Lehmann R."/>
            <person name="Hamlin N."/>
            <person name="Davies R."/>
            <person name="Gaudet P."/>
            <person name="Fey P."/>
            <person name="Pilcher K."/>
            <person name="Chen G."/>
            <person name="Saunders D."/>
            <person name="Sodergren E.J."/>
            <person name="Davis P."/>
            <person name="Kerhornou A."/>
            <person name="Nie X."/>
            <person name="Hall N."/>
            <person name="Anjard C."/>
            <person name="Hemphill L."/>
            <person name="Bason N."/>
            <person name="Farbrother P."/>
            <person name="Desany B."/>
            <person name="Just E."/>
            <person name="Morio T."/>
            <person name="Rost R."/>
            <person name="Churcher C.M."/>
            <person name="Cooper J."/>
            <person name="Haydock S."/>
            <person name="van Driessche N."/>
            <person name="Cronin A."/>
            <person name="Goodhead I."/>
            <person name="Muzny D.M."/>
            <person name="Mourier T."/>
            <person name="Pain A."/>
            <person name="Lu M."/>
            <person name="Harper D."/>
            <person name="Lindsay R."/>
            <person name="Hauser H."/>
            <person name="James K.D."/>
            <person name="Quiles M."/>
            <person name="Madan Babu M."/>
            <person name="Saito T."/>
            <person name="Buchrieser C."/>
            <person name="Wardroper A."/>
            <person name="Felder M."/>
            <person name="Thangavelu M."/>
            <person name="Johnson D."/>
            <person name="Knights A."/>
            <person name="Loulseged H."/>
            <person name="Mungall K.L."/>
            <person name="Oliver K."/>
            <person name="Price C."/>
            <person name="Quail M.A."/>
            <person name="Urushihara H."/>
            <person name="Hernandez J."/>
            <person name="Rabbinowitsch E."/>
            <person name="Steffen D."/>
            <person name="Sanders M."/>
            <person name="Ma J."/>
            <person name="Kohara Y."/>
            <person name="Sharp S."/>
            <person name="Simmonds M.N."/>
            <person name="Spiegler S."/>
            <person name="Tivey A."/>
            <person name="Sugano S."/>
            <person name="White B."/>
            <person name="Walker D."/>
            <person name="Woodward J.R."/>
            <person name="Winckler T."/>
            <person name="Tanaka Y."/>
            <person name="Shaulsky G."/>
            <person name="Schleicher M."/>
            <person name="Weinstock G.M."/>
            <person name="Rosenthal A."/>
            <person name="Cox E.C."/>
            <person name="Chisholm R.L."/>
            <person name="Gibbs R.A."/>
            <person name="Loomis W.F."/>
            <person name="Platzer M."/>
            <person name="Kay R.R."/>
            <person name="Williams J.G."/>
            <person name="Dear P.H."/>
            <person name="Noegel A.A."/>
            <person name="Barrell B.G."/>
            <person name="Kuspa A."/>
        </authorList>
    </citation>
    <scope>NUCLEOTIDE SEQUENCE [LARGE SCALE GENOMIC DNA]</scope>
    <source>
        <strain>AX4</strain>
    </source>
</reference>
<accession>Q54GX5</accession>
<organism>
    <name type="scientific">Dictyostelium discoideum</name>
    <name type="common">Social amoeba</name>
    <dbReference type="NCBI Taxonomy" id="44689"/>
    <lineage>
        <taxon>Eukaryota</taxon>
        <taxon>Amoebozoa</taxon>
        <taxon>Evosea</taxon>
        <taxon>Eumycetozoa</taxon>
        <taxon>Dictyostelia</taxon>
        <taxon>Dictyosteliales</taxon>
        <taxon>Dictyosteliaceae</taxon>
        <taxon>Dictyostelium</taxon>
    </lineage>
</organism>
<proteinExistence type="inferred from homology"/>
<gene>
    <name type="primary">pex1</name>
    <name type="ORF">DDB_G0289867</name>
</gene>
<sequence length="1227" mass="138952">MELHVQLKHSTDCFVSLPPKIVHSLLLLSEKQSKSLGTLGLEITWYDKINKKENKGYVGWAGGSTDPRFTDSIEMSQEMAQCLGGIKNEQKLKLKALNNIELAHSVQVEPLTSDDWEIMEVHQQYLEEQLLNQVNILYSGQIVPIWIHHKTIIKLKVTETLPTPVVKLSSNSEIIVAPKPRNLPTTTTSSQQQQISKETLKPRFLQIKDFKIDYNNNNTFINEIYINKELLNQFQWNIGDIIEISKVSKNNNKNNKKEKNNNGGDEEEDDDDNEEFDDDDDDDNNNNEDDTSKLQKQLDNKNNNNKKNKKNNKTIYARVFINDKSNNQQVLIHRNIRTIGNFYINTIVRLKYTTSHSLPICPIGSILVKQVIWKQNSLSNLIKQQSSQKIYSVEQIKEQIKVWSNNNLSNNQRYPLLNGSIVSINSNLDLSFNFNNLTSSIIPPTSSSSSSPSNNLDSQRSNNNNNNINNDQLNDITNNMNNPYLSSIQQIGDIMSNLNTNNNQNNQNNNSNKLMNQFQMNNGIFMLSLEILSNDKLLKIESGGNNSIEKKKSLEDYNEIGDRLFQRIGGMEKQIKQAKEFLSLYMYKDLSVIREQLNTPGVNGMIIAGSHGSGKSLLATSLGGYYSTDSRSNAFIIKLDCNQLKELKVENIRKQFNKLFYKSCKESGNTLSATTSTNTTPPPIIIILESLDLILGTPNDQDPGSKIRCEQLVSHIKSLCFKYQNRSSPIVMIATVISSQSLCQSIQIPELFGLTIELQAPTREERVEILERYLKYQGKQLKDQQSLNLMKFSASMEGYLGCDVEQIVDRSIHLSSIKEIENNNNNNDDNDDDNIIEFSIIEKAKEGYTPITLKGIKLHSSEIKWQDIGGLDSVRAMLKETIEWPTKYPKLFQSSPLRLRSGILLYGPTGCGKTLLASAIAGECGLNFISVKGPELLNKYIGSSEQGVRDVFSRASSAKPCVLFFDEFDSIAPRRGHDNSGVTDRVVNQFLTQLDGVEGLTGVYVLAATSRPDLIDPALLRPGRLDKSLYCNIPEFNERLDILTCLKSKMNLSPSISLEQLSTNTQYYTGADLRALMYNAQLKSIHEWMNHLEEEKKRKRKEKEDQSNKNSSQQQDDFIIFQPKNNDNSISKSNLTFEEKTNLQKQIDTIKSQFINSNTSTLNKSNLSNEQPPLITQSHIDLALKESSPSISESERKKYERIYNNFLKERGSVTGNKKEGVPKQTLA</sequence>
<name>PEX1_DICDI</name>
<protein>
    <recommendedName>
        <fullName evidence="4">Peroxisomal ATPase PEX1</fullName>
        <ecNumber evidence="1">3.6.4.-</ecNumber>
    </recommendedName>
    <alternativeName>
        <fullName>Peroxin-1</fullName>
    </alternativeName>
    <alternativeName>
        <fullName>Peroxisome biogenesis factor 1</fullName>
    </alternativeName>
</protein>
<evidence type="ECO:0000250" key="1">
    <source>
        <dbReference type="UniProtKB" id="O43933"/>
    </source>
</evidence>
<evidence type="ECO:0000255" key="2"/>
<evidence type="ECO:0000256" key="3">
    <source>
        <dbReference type="SAM" id="MobiDB-lite"/>
    </source>
</evidence>
<evidence type="ECO:0000305" key="4"/>
<dbReference type="EC" id="3.6.4.-" evidence="1"/>
<dbReference type="EMBL" id="AAFI02000149">
    <property type="protein sequence ID" value="EAL62534.1"/>
    <property type="molecule type" value="Genomic_DNA"/>
</dbReference>
<dbReference type="RefSeq" id="XP_636032.1">
    <property type="nucleotide sequence ID" value="XM_630940.1"/>
</dbReference>
<dbReference type="SMR" id="Q54GX5"/>
<dbReference type="FunCoup" id="Q54GX5">
    <property type="interactions" value="641"/>
</dbReference>
<dbReference type="STRING" id="44689.Q54GX5"/>
<dbReference type="PaxDb" id="44689-DDB0238022"/>
<dbReference type="EnsemblProtists" id="EAL62534">
    <property type="protein sequence ID" value="EAL62534"/>
    <property type="gene ID" value="DDB_G0289867"/>
</dbReference>
<dbReference type="GeneID" id="8627359"/>
<dbReference type="KEGG" id="ddi:DDB_G0289867"/>
<dbReference type="dictyBase" id="DDB_G0289867">
    <property type="gene designation" value="pex1"/>
</dbReference>
<dbReference type="VEuPathDB" id="AmoebaDB:DDB_G0289867"/>
<dbReference type="eggNOG" id="KOG0735">
    <property type="taxonomic scope" value="Eukaryota"/>
</dbReference>
<dbReference type="HOGENOM" id="CLU_000688_1_1_1"/>
<dbReference type="InParanoid" id="Q54GX5"/>
<dbReference type="OMA" id="WVVAWSG"/>
<dbReference type="PhylomeDB" id="Q54GX5"/>
<dbReference type="PRO" id="PR:Q54GX5"/>
<dbReference type="Proteomes" id="UP000002195">
    <property type="component" value="Chromosome 5"/>
</dbReference>
<dbReference type="GO" id="GO:0005829">
    <property type="term" value="C:cytosol"/>
    <property type="evidence" value="ECO:0000318"/>
    <property type="project" value="GO_Central"/>
</dbReference>
<dbReference type="GO" id="GO:0005778">
    <property type="term" value="C:peroxisomal membrane"/>
    <property type="evidence" value="ECO:0000318"/>
    <property type="project" value="GO_Central"/>
</dbReference>
<dbReference type="GO" id="GO:0005777">
    <property type="term" value="C:peroxisome"/>
    <property type="evidence" value="ECO:0000250"/>
    <property type="project" value="dictyBase"/>
</dbReference>
<dbReference type="GO" id="GO:0005524">
    <property type="term" value="F:ATP binding"/>
    <property type="evidence" value="ECO:0007669"/>
    <property type="project" value="UniProtKB-KW"/>
</dbReference>
<dbReference type="GO" id="GO:0016887">
    <property type="term" value="F:ATP hydrolysis activity"/>
    <property type="evidence" value="ECO:0000318"/>
    <property type="project" value="GO_Central"/>
</dbReference>
<dbReference type="GO" id="GO:0007031">
    <property type="term" value="P:peroxisome organization"/>
    <property type="evidence" value="ECO:0000250"/>
    <property type="project" value="dictyBase"/>
</dbReference>
<dbReference type="GO" id="GO:0016558">
    <property type="term" value="P:protein import into peroxisome matrix"/>
    <property type="evidence" value="ECO:0000318"/>
    <property type="project" value="GO_Central"/>
</dbReference>
<dbReference type="GO" id="GO:0043335">
    <property type="term" value="P:protein unfolding"/>
    <property type="evidence" value="ECO:0000318"/>
    <property type="project" value="GO_Central"/>
</dbReference>
<dbReference type="CDD" id="cd19526">
    <property type="entry name" value="RecA-like_PEX1_r2"/>
    <property type="match status" value="1"/>
</dbReference>
<dbReference type="FunFam" id="3.40.50.300:FF:000149">
    <property type="entry name" value="Nuclear valosin-containing protein-like"/>
    <property type="match status" value="1"/>
</dbReference>
<dbReference type="FunFam" id="1.10.8.60:FF:000105">
    <property type="entry name" value="PeRoXisome assembly factor"/>
    <property type="match status" value="1"/>
</dbReference>
<dbReference type="Gene3D" id="1.10.8.60">
    <property type="match status" value="2"/>
</dbReference>
<dbReference type="Gene3D" id="2.40.40.20">
    <property type="match status" value="1"/>
</dbReference>
<dbReference type="Gene3D" id="3.10.330.10">
    <property type="match status" value="1"/>
</dbReference>
<dbReference type="Gene3D" id="3.40.50.300">
    <property type="entry name" value="P-loop containing nucleotide triphosphate hydrolases"/>
    <property type="match status" value="2"/>
</dbReference>
<dbReference type="InterPro" id="IPR003593">
    <property type="entry name" value="AAA+_ATPase"/>
</dbReference>
<dbReference type="InterPro" id="IPR050168">
    <property type="entry name" value="AAA_ATPase_domain"/>
</dbReference>
<dbReference type="InterPro" id="IPR041569">
    <property type="entry name" value="AAA_lid_3"/>
</dbReference>
<dbReference type="InterPro" id="IPR003959">
    <property type="entry name" value="ATPase_AAA_core"/>
</dbReference>
<dbReference type="InterPro" id="IPR003960">
    <property type="entry name" value="ATPase_AAA_CS"/>
</dbReference>
<dbReference type="InterPro" id="IPR029067">
    <property type="entry name" value="CDC48_domain_2-like_sf"/>
</dbReference>
<dbReference type="InterPro" id="IPR027417">
    <property type="entry name" value="P-loop_NTPase"/>
</dbReference>
<dbReference type="InterPro" id="IPR015342">
    <property type="entry name" value="PEX1-N_C-lobe"/>
</dbReference>
<dbReference type="PANTHER" id="PTHR23077">
    <property type="entry name" value="AAA-FAMILY ATPASE"/>
    <property type="match status" value="1"/>
</dbReference>
<dbReference type="PANTHER" id="PTHR23077:SF12">
    <property type="entry name" value="PEROXISOMAL ATPASE PEX1"/>
    <property type="match status" value="1"/>
</dbReference>
<dbReference type="Pfam" id="PF00004">
    <property type="entry name" value="AAA"/>
    <property type="match status" value="1"/>
</dbReference>
<dbReference type="Pfam" id="PF17862">
    <property type="entry name" value="AAA_lid_3"/>
    <property type="match status" value="1"/>
</dbReference>
<dbReference type="Pfam" id="PF09262">
    <property type="entry name" value="PEX-1N"/>
    <property type="match status" value="1"/>
</dbReference>
<dbReference type="SMART" id="SM00382">
    <property type="entry name" value="AAA"/>
    <property type="match status" value="2"/>
</dbReference>
<dbReference type="SUPFAM" id="SSF54585">
    <property type="entry name" value="Cdc48 domain 2-like"/>
    <property type="match status" value="1"/>
</dbReference>
<dbReference type="SUPFAM" id="SSF52540">
    <property type="entry name" value="P-loop containing nucleoside triphosphate hydrolases"/>
    <property type="match status" value="2"/>
</dbReference>
<dbReference type="PROSITE" id="PS00674">
    <property type="entry name" value="AAA"/>
    <property type="match status" value="1"/>
</dbReference>
<feature type="chain" id="PRO_0000371402" description="Peroxisomal ATPase PEX1">
    <location>
        <begin position="1"/>
        <end position="1227"/>
    </location>
</feature>
<feature type="region of interest" description="Disordered" evidence="3">
    <location>
        <begin position="251"/>
        <end position="311"/>
    </location>
</feature>
<feature type="region of interest" description="Disordered" evidence="3">
    <location>
        <begin position="443"/>
        <end position="480"/>
    </location>
</feature>
<feature type="region of interest" description="Disordered" evidence="3">
    <location>
        <begin position="1096"/>
        <end position="1132"/>
    </location>
</feature>
<feature type="coiled-coil region" evidence="2">
    <location>
        <begin position="282"/>
        <end position="315"/>
    </location>
</feature>
<feature type="coiled-coil region" evidence="2">
    <location>
        <begin position="454"/>
        <end position="519"/>
    </location>
</feature>
<feature type="compositionally biased region" description="Acidic residues" evidence="3">
    <location>
        <begin position="264"/>
        <end position="289"/>
    </location>
</feature>
<feature type="compositionally biased region" description="Basic and acidic residues" evidence="3">
    <location>
        <begin position="290"/>
        <end position="299"/>
    </location>
</feature>
<feature type="compositionally biased region" description="Basic and acidic residues" evidence="3">
    <location>
        <begin position="1096"/>
        <end position="1107"/>
    </location>
</feature>
<feature type="compositionally biased region" description="Low complexity" evidence="3">
    <location>
        <begin position="1108"/>
        <end position="1117"/>
    </location>
</feature>
<feature type="compositionally biased region" description="Polar residues" evidence="3">
    <location>
        <begin position="1123"/>
        <end position="1132"/>
    </location>
</feature>
<feature type="binding site" evidence="2">
    <location>
        <begin position="609"/>
        <end position="616"/>
    </location>
    <ligand>
        <name>ATP</name>
        <dbReference type="ChEBI" id="CHEBI:30616"/>
    </ligand>
</feature>
<feature type="binding site" evidence="2">
    <location>
        <begin position="907"/>
        <end position="914"/>
    </location>
    <ligand>
        <name>ATP</name>
        <dbReference type="ChEBI" id="CHEBI:30616"/>
    </ligand>
</feature>